<organism>
    <name type="scientific">Streptococcus mutans serotype c (strain ATCC 700610 / UA159)</name>
    <dbReference type="NCBI Taxonomy" id="210007"/>
    <lineage>
        <taxon>Bacteria</taxon>
        <taxon>Bacillati</taxon>
        <taxon>Bacillota</taxon>
        <taxon>Bacilli</taxon>
        <taxon>Lactobacillales</taxon>
        <taxon>Streptococcaceae</taxon>
        <taxon>Streptococcus</taxon>
    </lineage>
</organism>
<comment type="function">
    <text evidence="1">Pyrophosphatase that catalyzes the hydrolysis of nucleoside triphosphates to their monophosphate derivatives, with a high preference for the non-canonical purine nucleotides XTP (xanthosine triphosphate), dITP (deoxyinosine triphosphate) and ITP. Seems to function as a house-cleaning enzyme that removes non-canonical purine nucleotides from the nucleotide pool, thus preventing their incorporation into DNA/RNA and avoiding chromosomal lesions.</text>
</comment>
<comment type="catalytic activity">
    <reaction evidence="1">
        <text>XTP + H2O = XMP + diphosphate + H(+)</text>
        <dbReference type="Rhea" id="RHEA:28610"/>
        <dbReference type="ChEBI" id="CHEBI:15377"/>
        <dbReference type="ChEBI" id="CHEBI:15378"/>
        <dbReference type="ChEBI" id="CHEBI:33019"/>
        <dbReference type="ChEBI" id="CHEBI:57464"/>
        <dbReference type="ChEBI" id="CHEBI:61314"/>
        <dbReference type="EC" id="3.6.1.66"/>
    </reaction>
</comment>
<comment type="catalytic activity">
    <reaction evidence="1">
        <text>dITP + H2O = dIMP + diphosphate + H(+)</text>
        <dbReference type="Rhea" id="RHEA:28342"/>
        <dbReference type="ChEBI" id="CHEBI:15377"/>
        <dbReference type="ChEBI" id="CHEBI:15378"/>
        <dbReference type="ChEBI" id="CHEBI:33019"/>
        <dbReference type="ChEBI" id="CHEBI:61194"/>
        <dbReference type="ChEBI" id="CHEBI:61382"/>
        <dbReference type="EC" id="3.6.1.66"/>
    </reaction>
</comment>
<comment type="catalytic activity">
    <reaction evidence="1">
        <text>ITP + H2O = IMP + diphosphate + H(+)</text>
        <dbReference type="Rhea" id="RHEA:29399"/>
        <dbReference type="ChEBI" id="CHEBI:15377"/>
        <dbReference type="ChEBI" id="CHEBI:15378"/>
        <dbReference type="ChEBI" id="CHEBI:33019"/>
        <dbReference type="ChEBI" id="CHEBI:58053"/>
        <dbReference type="ChEBI" id="CHEBI:61402"/>
        <dbReference type="EC" id="3.6.1.66"/>
    </reaction>
</comment>
<comment type="cofactor">
    <cofactor evidence="1">
        <name>Mg(2+)</name>
        <dbReference type="ChEBI" id="CHEBI:18420"/>
    </cofactor>
    <text evidence="1">Binds 1 Mg(2+) ion per subunit.</text>
</comment>
<comment type="subunit">
    <text evidence="1">Homodimer.</text>
</comment>
<comment type="similarity">
    <text evidence="1 2">Belongs to the HAM1 NTPase family.</text>
</comment>
<evidence type="ECO:0000255" key="1">
    <source>
        <dbReference type="HAMAP-Rule" id="MF_01405"/>
    </source>
</evidence>
<evidence type="ECO:0000305" key="2"/>
<feature type="chain" id="PRO_0000178239" description="dITP/XTP pyrophosphatase">
    <location>
        <begin position="1"/>
        <end position="325"/>
    </location>
</feature>
<feature type="region of interest" description="Unknown">
    <location>
        <begin position="1"/>
        <end position="128"/>
    </location>
</feature>
<feature type="region of interest" description="NTP pyrophosphatase">
    <location>
        <begin position="129"/>
        <end position="324"/>
    </location>
</feature>
<feature type="active site" description="Proton acceptor" evidence="1">
    <location>
        <position position="194"/>
    </location>
</feature>
<feature type="binding site" evidence="1">
    <location>
        <begin position="132"/>
        <end position="137"/>
    </location>
    <ligand>
        <name>substrate</name>
    </ligand>
</feature>
<feature type="binding site" evidence="1">
    <location>
        <position position="165"/>
    </location>
    <ligand>
        <name>Mg(2+)</name>
        <dbReference type="ChEBI" id="CHEBI:18420"/>
    </ligand>
</feature>
<feature type="binding site" evidence="1">
    <location>
        <position position="194"/>
    </location>
    <ligand>
        <name>Mg(2+)</name>
        <dbReference type="ChEBI" id="CHEBI:18420"/>
    </ligand>
</feature>
<feature type="binding site" evidence="1">
    <location>
        <position position="195"/>
    </location>
    <ligand>
        <name>substrate</name>
    </ligand>
</feature>
<feature type="binding site" evidence="1">
    <location>
        <begin position="278"/>
        <end position="281"/>
    </location>
    <ligand>
        <name>substrate</name>
    </ligand>
</feature>
<feature type="binding site" evidence="1">
    <location>
        <position position="301"/>
    </location>
    <ligand>
        <name>substrate</name>
    </ligand>
</feature>
<feature type="binding site" evidence="1">
    <location>
        <begin position="306"/>
        <end position="307"/>
    </location>
    <ligand>
        <name>substrate</name>
    </ligand>
</feature>
<reference key="1">
    <citation type="journal article" date="2002" name="Proc. Natl. Acad. Sci. U.S.A.">
        <title>Genome sequence of Streptococcus mutans UA159, a cariogenic dental pathogen.</title>
        <authorList>
            <person name="Ajdic D.J."/>
            <person name="McShan W.M."/>
            <person name="McLaughlin R.E."/>
            <person name="Savic G."/>
            <person name="Chang J."/>
            <person name="Carson M.B."/>
            <person name="Primeaux C."/>
            <person name="Tian R."/>
            <person name="Kenton S."/>
            <person name="Jia H.G."/>
            <person name="Lin S.P."/>
            <person name="Qian Y."/>
            <person name="Li S."/>
            <person name="Zhu H."/>
            <person name="Najar F.Z."/>
            <person name="Lai H."/>
            <person name="White J."/>
            <person name="Roe B.A."/>
            <person name="Ferretti J.J."/>
        </authorList>
    </citation>
    <scope>NUCLEOTIDE SEQUENCE [LARGE SCALE GENOMIC DNA]</scope>
    <source>
        <strain>ATCC 700610 / UA159</strain>
    </source>
</reference>
<sequence>MKEKIYEYKDDHNWFISQWSKVGSSTYYEEEAEETYSSIEQSLRGLLDEGNSFILTVIKINSNIALVRFILKMLNEEQQDNFKVSSHKGAILVTQGQQLLLVCLPKKGITITDFFEKEKKVSELGDTILIATRNEGKTKEFSQMFAQLGIKVENLNQYPDLPEVEETGLTFEENARLKAETISHLTGQMVLADDSGLKVDVLGGLPGIWSARFSGLDATDQSNNAKLLHELAMVFDIKDRSAQFHTTLVVAAPDKESLVVEADWSGYIDFAPKGNNGFGYDPLFLVGETGKTAAELSNHEKNIISHRGQAVKKLMEVFPAWQNAH</sequence>
<proteinExistence type="inferred from homology"/>
<dbReference type="EC" id="3.6.1.66" evidence="1"/>
<dbReference type="EMBL" id="AE014133">
    <property type="protein sequence ID" value="AAN59352.1"/>
    <property type="molecule type" value="Genomic_DNA"/>
</dbReference>
<dbReference type="RefSeq" id="NP_722046.1">
    <property type="nucleotide sequence ID" value="NC_004350.2"/>
</dbReference>
<dbReference type="RefSeq" id="WP_002262557.1">
    <property type="nucleotide sequence ID" value="NC_004350.2"/>
</dbReference>
<dbReference type="SMR" id="Q8DSQ6"/>
<dbReference type="STRING" id="210007.SMU_1717c"/>
<dbReference type="KEGG" id="smu:SMU_1717c"/>
<dbReference type="PATRIC" id="fig|210007.7.peg.1535"/>
<dbReference type="eggNOG" id="COG0127">
    <property type="taxonomic scope" value="Bacteria"/>
</dbReference>
<dbReference type="HOGENOM" id="CLU_863088_0_0_9"/>
<dbReference type="OrthoDB" id="9807456at2"/>
<dbReference type="PhylomeDB" id="Q8DSQ6"/>
<dbReference type="Proteomes" id="UP000002512">
    <property type="component" value="Chromosome"/>
</dbReference>
<dbReference type="GO" id="GO:0005829">
    <property type="term" value="C:cytosol"/>
    <property type="evidence" value="ECO:0007669"/>
    <property type="project" value="TreeGrafter"/>
</dbReference>
<dbReference type="GO" id="GO:0035870">
    <property type="term" value="F:dITP diphosphatase activity"/>
    <property type="evidence" value="ECO:0007669"/>
    <property type="project" value="RHEA"/>
</dbReference>
<dbReference type="GO" id="GO:0036220">
    <property type="term" value="F:ITP diphosphatase activity"/>
    <property type="evidence" value="ECO:0007669"/>
    <property type="project" value="UniProtKB-EC"/>
</dbReference>
<dbReference type="GO" id="GO:0046872">
    <property type="term" value="F:metal ion binding"/>
    <property type="evidence" value="ECO:0007669"/>
    <property type="project" value="UniProtKB-KW"/>
</dbReference>
<dbReference type="GO" id="GO:0000166">
    <property type="term" value="F:nucleotide binding"/>
    <property type="evidence" value="ECO:0007669"/>
    <property type="project" value="UniProtKB-KW"/>
</dbReference>
<dbReference type="GO" id="GO:0017111">
    <property type="term" value="F:ribonucleoside triphosphate phosphatase activity"/>
    <property type="evidence" value="ECO:0007669"/>
    <property type="project" value="InterPro"/>
</dbReference>
<dbReference type="GO" id="GO:0036222">
    <property type="term" value="F:XTP diphosphatase activity"/>
    <property type="evidence" value="ECO:0007669"/>
    <property type="project" value="RHEA"/>
</dbReference>
<dbReference type="GO" id="GO:0009117">
    <property type="term" value="P:nucleotide metabolic process"/>
    <property type="evidence" value="ECO:0007669"/>
    <property type="project" value="UniProtKB-KW"/>
</dbReference>
<dbReference type="GO" id="GO:0009146">
    <property type="term" value="P:purine nucleoside triphosphate catabolic process"/>
    <property type="evidence" value="ECO:0007669"/>
    <property type="project" value="UniProtKB-UniRule"/>
</dbReference>
<dbReference type="CDD" id="cd00515">
    <property type="entry name" value="HAM1"/>
    <property type="match status" value="1"/>
</dbReference>
<dbReference type="FunFam" id="3.90.950.10:FF:000001">
    <property type="entry name" value="dITP/XTP pyrophosphatase"/>
    <property type="match status" value="1"/>
</dbReference>
<dbReference type="Gene3D" id="3.90.950.10">
    <property type="match status" value="1"/>
</dbReference>
<dbReference type="HAMAP" id="MF_01405">
    <property type="entry name" value="Non_canon_purine_NTPase"/>
    <property type="match status" value="1"/>
</dbReference>
<dbReference type="InterPro" id="IPR020922">
    <property type="entry name" value="dITP/XTP_pyrophosphatase"/>
</dbReference>
<dbReference type="InterPro" id="IPR029001">
    <property type="entry name" value="ITPase-like_fam"/>
</dbReference>
<dbReference type="InterPro" id="IPR002637">
    <property type="entry name" value="RdgB/HAM1"/>
</dbReference>
<dbReference type="NCBIfam" id="NF002698">
    <property type="entry name" value="PRK02491.1"/>
    <property type="match status" value="1"/>
</dbReference>
<dbReference type="NCBIfam" id="NF011397">
    <property type="entry name" value="PRK14822.1"/>
    <property type="match status" value="1"/>
</dbReference>
<dbReference type="NCBIfam" id="TIGR00042">
    <property type="entry name" value="RdgB/HAM1 family non-canonical purine NTP pyrophosphatase"/>
    <property type="match status" value="1"/>
</dbReference>
<dbReference type="PANTHER" id="PTHR11067:SF9">
    <property type="entry name" value="INOSINE TRIPHOSPHATE PYROPHOSPHATASE"/>
    <property type="match status" value="1"/>
</dbReference>
<dbReference type="PANTHER" id="PTHR11067">
    <property type="entry name" value="INOSINE TRIPHOSPHATE PYROPHOSPHATASE/HAM1 PROTEIN"/>
    <property type="match status" value="1"/>
</dbReference>
<dbReference type="Pfam" id="PF01725">
    <property type="entry name" value="Ham1p_like"/>
    <property type="match status" value="1"/>
</dbReference>
<dbReference type="SUPFAM" id="SSF52972">
    <property type="entry name" value="ITPase-like"/>
    <property type="match status" value="1"/>
</dbReference>
<keyword id="KW-0378">Hydrolase</keyword>
<keyword id="KW-0460">Magnesium</keyword>
<keyword id="KW-0479">Metal-binding</keyword>
<keyword id="KW-0546">Nucleotide metabolism</keyword>
<keyword id="KW-0547">Nucleotide-binding</keyword>
<keyword id="KW-1185">Reference proteome</keyword>
<protein>
    <recommendedName>
        <fullName evidence="1">dITP/XTP pyrophosphatase</fullName>
        <ecNumber evidence="1">3.6.1.66</ecNumber>
    </recommendedName>
    <alternativeName>
        <fullName evidence="1">Non-canonical purine NTP pyrophosphatase</fullName>
    </alternativeName>
    <alternativeName>
        <fullName evidence="1">Non-standard purine NTP pyrophosphatase</fullName>
    </alternativeName>
    <alternativeName>
        <fullName evidence="1">Nucleoside-triphosphate diphosphatase</fullName>
    </alternativeName>
    <alternativeName>
        <fullName evidence="1">Nucleoside-triphosphate pyrophosphatase</fullName>
        <shortName evidence="1">NTPase</shortName>
    </alternativeName>
</protein>
<accession>Q8DSQ6</accession>
<name>IXTPA_STRMU</name>
<gene>
    <name type="ordered locus">SMU_1717c</name>
</gene>